<feature type="signal peptide" evidence="1">
    <location>
        <begin position="1"/>
        <end position="15"/>
    </location>
</feature>
<feature type="chain" id="PRO_0000283858" description="ORF8a protein">
    <location>
        <begin position="16"/>
        <end position="39"/>
    </location>
</feature>
<feature type="domain" description="SARS ORF8 Ig-like" evidence="2">
    <location>
        <begin position="16"/>
        <end position="39"/>
    </location>
</feature>
<gene>
    <name type="ORF">8a</name>
</gene>
<proteinExistence type="inferred from homology"/>
<reference key="1">
    <citation type="journal article" date="2003" name="Science">
        <title>Characterization of a novel coronavirus associated with severe acute respiratory syndrome.</title>
        <authorList>
            <person name="Rota P.A."/>
            <person name="Oberste M.S."/>
            <person name="Monroe S.S."/>
            <person name="Nix W.A."/>
            <person name="Campagnoli R."/>
            <person name="Icenogle J.P."/>
            <person name="Penaranda S."/>
            <person name="Bankamp B."/>
            <person name="Maher K."/>
            <person name="Chen M.-H."/>
            <person name="Tong S."/>
            <person name="Tamin A."/>
            <person name="Lowe L."/>
            <person name="Frace M."/>
            <person name="DeRisi J.L."/>
            <person name="Chen Q."/>
            <person name="Wang D."/>
            <person name="Erdman D.D."/>
            <person name="Peret T.C.T."/>
            <person name="Burns C."/>
            <person name="Ksiazek T.G."/>
            <person name="Rollin P.E."/>
            <person name="Sanchez A."/>
            <person name="Liffick S."/>
            <person name="Holloway B."/>
            <person name="Limor J."/>
            <person name="McCaustland K."/>
            <person name="Olsen-Rasmussen M."/>
            <person name="Fouchier R."/>
            <person name="Guenther S."/>
            <person name="Osterhaus A.D.M.E."/>
            <person name="Drosten C."/>
            <person name="Pallansch M.A."/>
            <person name="Anderson L.J."/>
            <person name="Bellini W.J."/>
        </authorList>
    </citation>
    <scope>NUCLEOTIDE SEQUENCE [GENOMIC RNA]</scope>
    <source>
        <strain>Isolate Urbani</strain>
    </source>
</reference>
<reference key="2">
    <citation type="journal article" date="2003" name="Science">
        <title>The genome sequence of the SARS-associated coronavirus.</title>
        <authorList>
            <person name="Marra M.A."/>
            <person name="Jones S.J.M."/>
            <person name="Astell C.R."/>
            <person name="Holt R.A."/>
            <person name="Brooks-Wilson A."/>
            <person name="Butterfield Y.S.N."/>
            <person name="Khattra J."/>
            <person name="Asano J.K."/>
            <person name="Barber S.A."/>
            <person name="Chan S.Y."/>
            <person name="Cloutier A."/>
            <person name="Coughlin S.M."/>
            <person name="Freeman D."/>
            <person name="Girn N."/>
            <person name="Griffith O.L."/>
            <person name="Leach S.R."/>
            <person name="Mayo M."/>
            <person name="McDonald H."/>
            <person name="Montgomery S.B."/>
            <person name="Pandoh P.K."/>
            <person name="Petrescu A.S."/>
            <person name="Robertson A.G."/>
            <person name="Schein J.E."/>
            <person name="Siddiqui A."/>
            <person name="Smailus D.E."/>
            <person name="Stott J.M."/>
            <person name="Yang G.S."/>
            <person name="Plummer F."/>
            <person name="Andonov A."/>
            <person name="Artsob H."/>
            <person name="Bastien N."/>
            <person name="Bernard K."/>
            <person name="Booth T.F."/>
            <person name="Bowness D."/>
            <person name="Czub M."/>
            <person name="Drebot M."/>
            <person name="Fernando L."/>
            <person name="Flick R."/>
            <person name="Garbutt M."/>
            <person name="Gray M."/>
            <person name="Grolla A."/>
            <person name="Jones S."/>
            <person name="Feldmann H."/>
            <person name="Meyers A."/>
            <person name="Kabani A."/>
            <person name="Li Y."/>
            <person name="Normand S."/>
            <person name="Stroher U."/>
            <person name="Tipples G.A."/>
            <person name="Tyler S."/>
            <person name="Vogrig R."/>
            <person name="Ward D."/>
            <person name="Watson B."/>
            <person name="Brunham R.C."/>
            <person name="Krajden M."/>
            <person name="Petric M."/>
            <person name="Skowronski D.M."/>
            <person name="Upton C."/>
            <person name="Roper R.L."/>
        </authorList>
    </citation>
    <scope>NUCLEOTIDE SEQUENCE [GENOMIC RNA]</scope>
    <source>
        <strain>Isolate Tor2</strain>
    </source>
</reference>
<reference key="3">
    <citation type="journal article" date="2003" name="J. Gen. Virol.">
        <title>Mechanisms and enzymes involved in SARS coronavirus genome expression.</title>
        <authorList>
            <person name="Thiel V."/>
            <person name="Ivanov K.A."/>
            <person name="Putics A."/>
            <person name="Hertzig T."/>
            <person name="Schelle B."/>
            <person name="Bayer S."/>
            <person name="Weissbrich B."/>
            <person name="Snijder E.J."/>
            <person name="Rabenau H."/>
            <person name="Doerr H.W."/>
            <person name="Gorbalenya A.E."/>
            <person name="Ziebuhr J."/>
        </authorList>
    </citation>
    <scope>NUCLEOTIDE SEQUENCE [GENOMIC RNA]</scope>
    <source>
        <strain>Isolate Frankfurt 1</strain>
    </source>
</reference>
<dbReference type="EMBL" id="AY278741">
    <property type="status" value="NOT_ANNOTATED_CDS"/>
    <property type="molecule type" value="Genomic_RNA"/>
</dbReference>
<dbReference type="EMBL" id="AY274119">
    <property type="protein sequence ID" value="AAP41045.1"/>
    <property type="molecule type" value="Genomic_RNA"/>
</dbReference>
<dbReference type="EMBL" id="AY291315">
    <property type="protein sequence ID" value="AAP33705.1"/>
    <property type="molecule type" value="Genomic_RNA"/>
</dbReference>
<dbReference type="SMR" id="Q7TFA0"/>
<dbReference type="BioGRID" id="4383922">
    <property type="interactions" value="36"/>
</dbReference>
<dbReference type="IntAct" id="Q7TFA0">
    <property type="interactions" value="24"/>
</dbReference>
<dbReference type="SIGNOR" id="Q7TFA0"/>
<dbReference type="Proteomes" id="UP000000354">
    <property type="component" value="Segment"/>
</dbReference>
<dbReference type="Proteomes" id="UP000137377">
    <property type="component" value="Genome"/>
</dbReference>
<dbReference type="Proteomes" id="UP000180358">
    <property type="component" value="Segment"/>
</dbReference>
<dbReference type="InterPro" id="IPR022722">
    <property type="entry name" value="ORF8_betacoronavirus"/>
</dbReference>
<dbReference type="InterPro" id="IPR046444">
    <property type="entry name" value="SARS_ORF8_IG"/>
</dbReference>
<dbReference type="Pfam" id="PF12093">
    <property type="entry name" value="bCoV_NS8"/>
    <property type="match status" value="1"/>
</dbReference>
<dbReference type="PROSITE" id="PS51964">
    <property type="entry name" value="SARS_ORF8_IG"/>
    <property type="match status" value="1"/>
</dbReference>
<organismHost>
    <name type="scientific">Homo sapiens</name>
    <name type="common">Human</name>
    <dbReference type="NCBI Taxonomy" id="9606"/>
</organismHost>
<organismHost>
    <name type="scientific">Paguma larvata</name>
    <name type="common">Masked palm civet</name>
    <dbReference type="NCBI Taxonomy" id="9675"/>
</organismHost>
<keyword id="KW-1185">Reference proteome</keyword>
<keyword id="KW-0732">Signal</keyword>
<name>NS8A_SARS</name>
<evidence type="ECO:0000255" key="1"/>
<evidence type="ECO:0000255" key="2">
    <source>
        <dbReference type="PROSITE-ProRule" id="PRU01309"/>
    </source>
</evidence>
<protein>
    <recommendedName>
        <fullName>ORF8a protein</fullName>
    </recommendedName>
    <alternativeName>
        <fullName>Accessory protein 8a</fullName>
    </alternativeName>
    <alternativeName>
        <fullName>Protein non-structural 8a</fullName>
        <shortName>ns8a</shortName>
    </alternativeName>
</protein>
<accession>Q7TFA0</accession>
<accession>Q7TLC8</accession>
<organism>
    <name type="scientific">Severe acute respiratory syndrome coronavirus</name>
    <name type="common">SARS-CoV</name>
    <dbReference type="NCBI Taxonomy" id="694009"/>
    <lineage>
        <taxon>Viruses</taxon>
        <taxon>Riboviria</taxon>
        <taxon>Orthornavirae</taxon>
        <taxon>Pisuviricota</taxon>
        <taxon>Pisoniviricetes</taxon>
        <taxon>Nidovirales</taxon>
        <taxon>Cornidovirineae</taxon>
        <taxon>Coronaviridae</taxon>
        <taxon>Orthocoronavirinae</taxon>
        <taxon>Betacoronavirus</taxon>
        <taxon>Sarbecovirus</taxon>
    </lineage>
</organism>
<sequence>MKLLIVLTCISLCSCICTVVQRCASNKPHVLEDPCKVQH</sequence>